<protein>
    <recommendedName>
        <fullName evidence="1">Elongation factor 1-beta</fullName>
        <shortName evidence="1">EF-1-beta</shortName>
    </recommendedName>
    <alternativeName>
        <fullName evidence="1">aEF-1beta</fullName>
    </alternativeName>
</protein>
<organism>
    <name type="scientific">Methanosphaera stadtmanae (strain ATCC 43021 / DSM 3091 / JCM 11832 / MCB-3)</name>
    <dbReference type="NCBI Taxonomy" id="339860"/>
    <lineage>
        <taxon>Archaea</taxon>
        <taxon>Methanobacteriati</taxon>
        <taxon>Methanobacteriota</taxon>
        <taxon>Methanomada group</taxon>
        <taxon>Methanobacteria</taxon>
        <taxon>Methanobacteriales</taxon>
        <taxon>Methanobacteriaceae</taxon>
        <taxon>Methanosphaera</taxon>
    </lineage>
</organism>
<sequence>MSDVAAILKVMPESPEIDLEALKETIKNTIDADSFERIEEEPIGFGLIALNVTIVVDDGEGGTEPAEEALAALDEIQSVEVTDVRRLM</sequence>
<keyword id="KW-0251">Elongation factor</keyword>
<keyword id="KW-0648">Protein biosynthesis</keyword>
<keyword id="KW-1185">Reference proteome</keyword>
<name>EF1B_METST</name>
<reference key="1">
    <citation type="journal article" date="2006" name="J. Bacteriol.">
        <title>The genome sequence of Methanosphaera stadtmanae reveals why this human intestinal archaeon is restricted to methanol and H2 for methane formation and ATP synthesis.</title>
        <authorList>
            <person name="Fricke W.F."/>
            <person name="Seedorf H."/>
            <person name="Henne A."/>
            <person name="Kruer M."/>
            <person name="Liesegang H."/>
            <person name="Hedderich R."/>
            <person name="Gottschalk G."/>
            <person name="Thauer R.K."/>
        </authorList>
    </citation>
    <scope>NUCLEOTIDE SEQUENCE [LARGE SCALE GENOMIC DNA]</scope>
    <source>
        <strain>ATCC 43021 / DSM 3091 / JCM 11832 / MCB-3</strain>
    </source>
</reference>
<evidence type="ECO:0000255" key="1">
    <source>
        <dbReference type="HAMAP-Rule" id="MF_00043"/>
    </source>
</evidence>
<gene>
    <name evidence="1" type="primary">ef1b</name>
    <name type="ordered locus">Msp_1159</name>
</gene>
<accession>Q2NF63</accession>
<comment type="function">
    <text evidence="1">Promotes the exchange of GDP for GTP in EF-1-alpha/GDP, thus allowing the regeneration of EF-1-alpha/GTP that could then be used to form the ternary complex EF-1-alpha/GTP/AAtRNA.</text>
</comment>
<comment type="similarity">
    <text evidence="1">Belongs to the EF-1-beta/EF-1-delta family.</text>
</comment>
<dbReference type="EMBL" id="CP000102">
    <property type="protein sequence ID" value="ABC57540.1"/>
    <property type="molecule type" value="Genomic_DNA"/>
</dbReference>
<dbReference type="RefSeq" id="WP_011406739.1">
    <property type="nucleotide sequence ID" value="NC_007681.1"/>
</dbReference>
<dbReference type="SMR" id="Q2NF63"/>
<dbReference type="STRING" id="339860.Msp_1159"/>
<dbReference type="KEGG" id="mst:Msp_1159"/>
<dbReference type="eggNOG" id="arCOG01988">
    <property type="taxonomic scope" value="Archaea"/>
</dbReference>
<dbReference type="HOGENOM" id="CLU_165896_0_0_2"/>
<dbReference type="OrthoDB" id="84643at2157"/>
<dbReference type="Proteomes" id="UP000001931">
    <property type="component" value="Chromosome"/>
</dbReference>
<dbReference type="GO" id="GO:0003746">
    <property type="term" value="F:translation elongation factor activity"/>
    <property type="evidence" value="ECO:0007669"/>
    <property type="project" value="UniProtKB-UniRule"/>
</dbReference>
<dbReference type="CDD" id="cd00292">
    <property type="entry name" value="EF1B"/>
    <property type="match status" value="1"/>
</dbReference>
<dbReference type="Gene3D" id="3.30.70.60">
    <property type="match status" value="1"/>
</dbReference>
<dbReference type="HAMAP" id="MF_00043">
    <property type="entry name" value="EF1_beta"/>
    <property type="match status" value="1"/>
</dbReference>
<dbReference type="InterPro" id="IPR036219">
    <property type="entry name" value="eEF-1beta-like_sf"/>
</dbReference>
<dbReference type="InterPro" id="IPR014038">
    <property type="entry name" value="EF1B_bsu/dsu_GNE"/>
</dbReference>
<dbReference type="InterPro" id="IPR014717">
    <property type="entry name" value="Transl_elong_EF1B/ribsomal_bS6"/>
</dbReference>
<dbReference type="InterPro" id="IPR004542">
    <property type="entry name" value="Transl_elong_EF1B_B_arc"/>
</dbReference>
<dbReference type="NCBIfam" id="TIGR00489">
    <property type="entry name" value="aEF-1_beta"/>
    <property type="match status" value="1"/>
</dbReference>
<dbReference type="NCBIfam" id="NF001670">
    <property type="entry name" value="PRK00435.1"/>
    <property type="match status" value="1"/>
</dbReference>
<dbReference type="PANTHER" id="PTHR39647">
    <property type="entry name" value="ELONGATION FACTOR 1-BETA"/>
    <property type="match status" value="1"/>
</dbReference>
<dbReference type="PANTHER" id="PTHR39647:SF1">
    <property type="entry name" value="ELONGATION FACTOR 1-BETA"/>
    <property type="match status" value="1"/>
</dbReference>
<dbReference type="Pfam" id="PF00736">
    <property type="entry name" value="EF1_GNE"/>
    <property type="match status" value="1"/>
</dbReference>
<dbReference type="PIRSF" id="PIRSF006521">
    <property type="entry name" value="Transl_elong_EF1B_B_arc"/>
    <property type="match status" value="1"/>
</dbReference>
<dbReference type="SMART" id="SM00888">
    <property type="entry name" value="EF1_GNE"/>
    <property type="match status" value="1"/>
</dbReference>
<dbReference type="SUPFAM" id="SSF54984">
    <property type="entry name" value="eEF-1beta-like"/>
    <property type="match status" value="1"/>
</dbReference>
<proteinExistence type="inferred from homology"/>
<feature type="chain" id="PRO_0000366436" description="Elongation factor 1-beta">
    <location>
        <begin position="1"/>
        <end position="88"/>
    </location>
</feature>